<accession>A5ILJ3</accession>
<feature type="chain" id="PRO_1000077940" description="UvrABC system protein B">
    <location>
        <begin position="1"/>
        <end position="664"/>
    </location>
</feature>
<feature type="domain" description="Helicase ATP-binding" evidence="1">
    <location>
        <begin position="23"/>
        <end position="180"/>
    </location>
</feature>
<feature type="domain" description="Helicase C-terminal" evidence="1">
    <location>
        <begin position="429"/>
        <end position="588"/>
    </location>
</feature>
<feature type="domain" description="UVR" evidence="1">
    <location>
        <begin position="622"/>
        <end position="657"/>
    </location>
</feature>
<feature type="short sequence motif" description="Beta-hairpin">
    <location>
        <begin position="89"/>
        <end position="112"/>
    </location>
</feature>
<feature type="binding site" evidence="1">
    <location>
        <begin position="36"/>
        <end position="43"/>
    </location>
    <ligand>
        <name>ATP</name>
        <dbReference type="ChEBI" id="CHEBI:30616"/>
    </ligand>
</feature>
<organism>
    <name type="scientific">Thermotoga petrophila (strain ATCC BAA-488 / DSM 13995 / JCM 10881 / RKU-1)</name>
    <dbReference type="NCBI Taxonomy" id="390874"/>
    <lineage>
        <taxon>Bacteria</taxon>
        <taxon>Thermotogati</taxon>
        <taxon>Thermotogota</taxon>
        <taxon>Thermotogae</taxon>
        <taxon>Thermotogales</taxon>
        <taxon>Thermotogaceae</taxon>
        <taxon>Thermotoga</taxon>
    </lineage>
</organism>
<evidence type="ECO:0000255" key="1">
    <source>
        <dbReference type="HAMAP-Rule" id="MF_00204"/>
    </source>
</evidence>
<comment type="function">
    <text evidence="1">The UvrABC repair system catalyzes the recognition and processing of DNA lesions. A damage recognition complex composed of 2 UvrA and 2 UvrB subunits scans DNA for abnormalities. Upon binding of the UvrA(2)B(2) complex to a putative damaged site, the DNA wraps around one UvrB monomer. DNA wrap is dependent on ATP binding by UvrB and probably causes local melting of the DNA helix, facilitating insertion of UvrB beta-hairpin between the DNA strands. Then UvrB probes one DNA strand for the presence of a lesion. If a lesion is found the UvrA subunits dissociate and the UvrB-DNA preincision complex is formed. This complex is subsequently bound by UvrC and the second UvrB is released. If no lesion is found, the DNA wraps around the other UvrB subunit that will check the other stand for damage.</text>
</comment>
<comment type="subunit">
    <text evidence="1">Forms a heterotetramer with UvrA during the search for lesions. Interacts with UvrC in an incision complex.</text>
</comment>
<comment type="subcellular location">
    <subcellularLocation>
        <location evidence="1">Cytoplasm</location>
    </subcellularLocation>
</comment>
<comment type="domain">
    <text evidence="1">The beta-hairpin motif is involved in DNA binding.</text>
</comment>
<comment type="similarity">
    <text evidence="1">Belongs to the UvrB family.</text>
</comment>
<proteinExistence type="inferred from homology"/>
<name>UVRB_THEP1</name>
<gene>
    <name evidence="1" type="primary">uvrB</name>
    <name type="ordered locus">Tpet_1049</name>
</gene>
<keyword id="KW-0067">ATP-binding</keyword>
<keyword id="KW-0963">Cytoplasm</keyword>
<keyword id="KW-0227">DNA damage</keyword>
<keyword id="KW-0228">DNA excision</keyword>
<keyword id="KW-0234">DNA repair</keyword>
<keyword id="KW-0267">Excision nuclease</keyword>
<keyword id="KW-0347">Helicase</keyword>
<keyword id="KW-0378">Hydrolase</keyword>
<keyword id="KW-0547">Nucleotide-binding</keyword>
<keyword id="KW-0742">SOS response</keyword>
<reference key="1">
    <citation type="submission" date="2007-05" db="EMBL/GenBank/DDBJ databases">
        <title>Complete sequence of Thermotoga petrophila RKU-1.</title>
        <authorList>
            <consortium name="US DOE Joint Genome Institute"/>
            <person name="Copeland A."/>
            <person name="Lucas S."/>
            <person name="Lapidus A."/>
            <person name="Barry K."/>
            <person name="Glavina del Rio T."/>
            <person name="Dalin E."/>
            <person name="Tice H."/>
            <person name="Pitluck S."/>
            <person name="Sims D."/>
            <person name="Brettin T."/>
            <person name="Bruce D."/>
            <person name="Detter J.C."/>
            <person name="Han C."/>
            <person name="Tapia R."/>
            <person name="Schmutz J."/>
            <person name="Larimer F."/>
            <person name="Land M."/>
            <person name="Hauser L."/>
            <person name="Kyrpides N."/>
            <person name="Mikhailova N."/>
            <person name="Nelson K."/>
            <person name="Gogarten J.P."/>
            <person name="Noll K."/>
            <person name="Richardson P."/>
        </authorList>
    </citation>
    <scope>NUCLEOTIDE SEQUENCE [LARGE SCALE GENOMIC DNA]</scope>
    <source>
        <strain>ATCC BAA-488 / DSM 13995 / JCM 10881 / RKU-1</strain>
    </source>
</reference>
<protein>
    <recommendedName>
        <fullName evidence="1">UvrABC system protein B</fullName>
        <shortName evidence="1">Protein UvrB</shortName>
    </recommendedName>
    <alternativeName>
        <fullName evidence="1">Excinuclease ABC subunit B</fullName>
    </alternativeName>
</protein>
<dbReference type="EMBL" id="CP000702">
    <property type="protein sequence ID" value="ABQ47066.1"/>
    <property type="molecule type" value="Genomic_DNA"/>
</dbReference>
<dbReference type="RefSeq" id="WP_011943596.1">
    <property type="nucleotide sequence ID" value="NC_009486.1"/>
</dbReference>
<dbReference type="SMR" id="A5ILJ3"/>
<dbReference type="STRING" id="390874.Tpet_1049"/>
<dbReference type="KEGG" id="tpt:Tpet_1049"/>
<dbReference type="eggNOG" id="COG0556">
    <property type="taxonomic scope" value="Bacteria"/>
</dbReference>
<dbReference type="HOGENOM" id="CLU_009621_2_1_0"/>
<dbReference type="Proteomes" id="UP000006558">
    <property type="component" value="Chromosome"/>
</dbReference>
<dbReference type="GO" id="GO:0005737">
    <property type="term" value="C:cytoplasm"/>
    <property type="evidence" value="ECO:0007669"/>
    <property type="project" value="UniProtKB-SubCell"/>
</dbReference>
<dbReference type="GO" id="GO:0009380">
    <property type="term" value="C:excinuclease repair complex"/>
    <property type="evidence" value="ECO:0007669"/>
    <property type="project" value="InterPro"/>
</dbReference>
<dbReference type="GO" id="GO:0005524">
    <property type="term" value="F:ATP binding"/>
    <property type="evidence" value="ECO:0007669"/>
    <property type="project" value="UniProtKB-UniRule"/>
</dbReference>
<dbReference type="GO" id="GO:0016887">
    <property type="term" value="F:ATP hydrolysis activity"/>
    <property type="evidence" value="ECO:0007669"/>
    <property type="project" value="InterPro"/>
</dbReference>
<dbReference type="GO" id="GO:0003677">
    <property type="term" value="F:DNA binding"/>
    <property type="evidence" value="ECO:0007669"/>
    <property type="project" value="UniProtKB-UniRule"/>
</dbReference>
<dbReference type="GO" id="GO:0009381">
    <property type="term" value="F:excinuclease ABC activity"/>
    <property type="evidence" value="ECO:0007669"/>
    <property type="project" value="UniProtKB-UniRule"/>
</dbReference>
<dbReference type="GO" id="GO:0004386">
    <property type="term" value="F:helicase activity"/>
    <property type="evidence" value="ECO:0007669"/>
    <property type="project" value="UniProtKB-KW"/>
</dbReference>
<dbReference type="GO" id="GO:0006289">
    <property type="term" value="P:nucleotide-excision repair"/>
    <property type="evidence" value="ECO:0007669"/>
    <property type="project" value="UniProtKB-UniRule"/>
</dbReference>
<dbReference type="GO" id="GO:0009432">
    <property type="term" value="P:SOS response"/>
    <property type="evidence" value="ECO:0007669"/>
    <property type="project" value="UniProtKB-UniRule"/>
</dbReference>
<dbReference type="CDD" id="cd17916">
    <property type="entry name" value="DEXHc_UvrB"/>
    <property type="match status" value="1"/>
</dbReference>
<dbReference type="CDD" id="cd18790">
    <property type="entry name" value="SF2_C_UvrB"/>
    <property type="match status" value="1"/>
</dbReference>
<dbReference type="Gene3D" id="3.40.50.300">
    <property type="entry name" value="P-loop containing nucleotide triphosphate hydrolases"/>
    <property type="match status" value="3"/>
</dbReference>
<dbReference type="Gene3D" id="4.10.860.10">
    <property type="entry name" value="UVR domain"/>
    <property type="match status" value="1"/>
</dbReference>
<dbReference type="HAMAP" id="MF_00204">
    <property type="entry name" value="UvrB"/>
    <property type="match status" value="1"/>
</dbReference>
<dbReference type="InterPro" id="IPR006935">
    <property type="entry name" value="Helicase/UvrB_N"/>
</dbReference>
<dbReference type="InterPro" id="IPR014001">
    <property type="entry name" value="Helicase_ATP-bd"/>
</dbReference>
<dbReference type="InterPro" id="IPR001650">
    <property type="entry name" value="Helicase_C-like"/>
</dbReference>
<dbReference type="InterPro" id="IPR027417">
    <property type="entry name" value="P-loop_NTPase"/>
</dbReference>
<dbReference type="InterPro" id="IPR001943">
    <property type="entry name" value="UVR_dom"/>
</dbReference>
<dbReference type="InterPro" id="IPR036876">
    <property type="entry name" value="UVR_dom_sf"/>
</dbReference>
<dbReference type="InterPro" id="IPR004807">
    <property type="entry name" value="UvrB"/>
</dbReference>
<dbReference type="InterPro" id="IPR041471">
    <property type="entry name" value="UvrB_inter"/>
</dbReference>
<dbReference type="InterPro" id="IPR024759">
    <property type="entry name" value="UvrB_YAD/RRR_dom"/>
</dbReference>
<dbReference type="NCBIfam" id="NF003673">
    <property type="entry name" value="PRK05298.1"/>
    <property type="match status" value="1"/>
</dbReference>
<dbReference type="NCBIfam" id="TIGR00631">
    <property type="entry name" value="uvrb"/>
    <property type="match status" value="1"/>
</dbReference>
<dbReference type="PANTHER" id="PTHR24029">
    <property type="entry name" value="UVRABC SYSTEM PROTEIN B"/>
    <property type="match status" value="1"/>
</dbReference>
<dbReference type="PANTHER" id="PTHR24029:SF0">
    <property type="entry name" value="UVRABC SYSTEM PROTEIN B"/>
    <property type="match status" value="1"/>
</dbReference>
<dbReference type="Pfam" id="PF00271">
    <property type="entry name" value="Helicase_C"/>
    <property type="match status" value="1"/>
</dbReference>
<dbReference type="Pfam" id="PF04851">
    <property type="entry name" value="ResIII"/>
    <property type="match status" value="1"/>
</dbReference>
<dbReference type="Pfam" id="PF02151">
    <property type="entry name" value="UVR"/>
    <property type="match status" value="1"/>
</dbReference>
<dbReference type="Pfam" id="PF12344">
    <property type="entry name" value="UvrB"/>
    <property type="match status" value="1"/>
</dbReference>
<dbReference type="Pfam" id="PF17757">
    <property type="entry name" value="UvrB_inter"/>
    <property type="match status" value="1"/>
</dbReference>
<dbReference type="SMART" id="SM00487">
    <property type="entry name" value="DEXDc"/>
    <property type="match status" value="1"/>
</dbReference>
<dbReference type="SMART" id="SM00490">
    <property type="entry name" value="HELICc"/>
    <property type="match status" value="1"/>
</dbReference>
<dbReference type="SUPFAM" id="SSF46600">
    <property type="entry name" value="C-terminal UvrC-binding domain of UvrB"/>
    <property type="match status" value="1"/>
</dbReference>
<dbReference type="SUPFAM" id="SSF52540">
    <property type="entry name" value="P-loop containing nucleoside triphosphate hydrolases"/>
    <property type="match status" value="2"/>
</dbReference>
<dbReference type="PROSITE" id="PS51192">
    <property type="entry name" value="HELICASE_ATP_BIND_1"/>
    <property type="match status" value="1"/>
</dbReference>
<dbReference type="PROSITE" id="PS51194">
    <property type="entry name" value="HELICASE_CTER"/>
    <property type="match status" value="1"/>
</dbReference>
<dbReference type="PROSITE" id="PS50151">
    <property type="entry name" value="UVR"/>
    <property type="match status" value="1"/>
</dbReference>
<sequence>MFKLVSEFEPTGDQPQAIEKLVEGLNRGMRFQTLLGVTGSGKTFTMANVIARVNRPALVISPNKTLAAQLYQEFKAFFPENRVEFFISYYDYYQPEAYIPTKDLYIEKNADINDVIVRMRMSTLKSVRTRRDVVVVASVSCIYATGDPNDFDRMNINLAVGDRIDVLELAERLARIGYQRTEDVSLSGCFRLKGDTVEIYPTYQDEGIRIEFFGDEVDSITLIDRFNRTTLEHLDKIIIYPAVEFITTEEKLKRAVESIREELNERLSELKKQGKILEYERLKQRTLNDIELLETMGYCPGIENYSRHFDGRKPGEPPYTLLDYFDKDFIVFIDESHITVPQLRAMYNGDRSRKKNLVEYGFRLPSAYDNRPLTFEEFLKKTGQIIFVSATPGDFELSISEQVVEQIIRPTGLVDPEVEVRPTAGQVDDLVNEIVKVKERGERALVTVLTKKTAELLSEHLTELGIRSLYLHSELDAIERVEVLKKLRRGDVDVVVGVNLLREGLDLPEVSLVAIMDADVEGFLRSETTLIQIIGRTARNINGKVIMYADRITNAMKRAIEETNRRRRIQLEYNKKHGITPRSVIKPLEIEVFEQFMVKEEPERYGDTVKNIFEMKKTLSPEEYMAVLEEEMYRAASELRYEDAAALRDELFRIREEIKKKKGL</sequence>